<feature type="chain" id="PRO_0000249687" description="BRCA2 and CDKN1A-interacting protein">
    <location>
        <begin position="1"/>
        <end position="314"/>
    </location>
</feature>
<feature type="region of interest" description="Disordered" evidence="2">
    <location>
        <begin position="1"/>
        <end position="56"/>
    </location>
</feature>
<feature type="region of interest" description="Interaction with BRCA2">
    <location>
        <begin position="59"/>
        <end position="167"/>
    </location>
</feature>
<feature type="region of interest" description="Interaction with CDKN1A">
    <location>
        <begin position="161"/>
        <end position="259"/>
    </location>
</feature>
<feature type="compositionally biased region" description="Acidic residues" evidence="2">
    <location>
        <begin position="25"/>
        <end position="56"/>
    </location>
</feature>
<feature type="modified residue" description="Phosphoserine" evidence="17 18 19">
    <location>
        <position position="42"/>
    </location>
</feature>
<feature type="modified residue" description="Phosphoserine" evidence="20">
    <location>
        <position position="112"/>
    </location>
</feature>
<feature type="modified residue" description="Phosphoserine" evidence="1">
    <location>
        <position position="281"/>
    </location>
</feature>
<feature type="splice variant" id="VSP_020540" description="In isoform 2." evidence="12 13">
    <original>KAILKFNYSVQEESDTCLGGKWSFDDVPMTPLRTVMLIPGDKMNEIMDKLKEYLSV</original>
    <variation>EQGKPEVLGGPDTRRGLEPVPIQHNGGSRGQVTALVSLKAGLIQSRSTLSDFQGTFMTVGIALS</variation>
    <location>
        <begin position="259"/>
        <end position="314"/>
    </location>
</feature>
<feature type="splice variant" id="VSP_042023" description="In isoform 4." evidence="14">
    <original>KAILKFNYSVQEESDTCLGGKWSFDDVPMTPLRTVMLIPGDKMNEIMDKLKEYLSV</original>
    <variation>EQGKPEVLGGPDTRRGLEPVPIQHNGWSVPPVLE</variation>
    <location>
        <begin position="259"/>
        <end position="314"/>
    </location>
</feature>
<feature type="splice variant" id="VSP_020541" description="In isoform 3." evidence="15">
    <original>VPMTPLRTVMLIPGDKMNEIMDKLKEYLSV</original>
    <variation>WSVPPVLE</variation>
    <location>
        <begin position="285"/>
        <end position="314"/>
    </location>
</feature>
<feature type="sequence variant" id="VAR_046642" description="In dbSNP:rs17153610.">
    <original>E</original>
    <variation>Q</variation>
    <location>
        <position position="254"/>
    </location>
</feature>
<feature type="sequence conflict" description="In Ref. 3; BAG51557." evidence="16" ref="3">
    <original>K</original>
    <variation>R</variation>
    <location>
        <position position="75"/>
    </location>
</feature>
<feature type="sequence conflict" description="In Ref. 6; AAH09771." evidence="16" ref="6">
    <original>G</original>
    <variation>E</variation>
    <location>
        <position position="230"/>
    </location>
</feature>
<feature type="strand" evidence="22">
    <location>
        <begin position="61"/>
        <end position="64"/>
    </location>
</feature>
<feature type="helix" evidence="22">
    <location>
        <begin position="68"/>
        <end position="70"/>
    </location>
</feature>
<feature type="helix" evidence="22">
    <location>
        <begin position="71"/>
        <end position="82"/>
    </location>
</feature>
<feature type="helix" evidence="22">
    <location>
        <begin position="89"/>
        <end position="98"/>
    </location>
</feature>
<feature type="turn" evidence="21">
    <location>
        <begin position="99"/>
        <end position="102"/>
    </location>
</feature>
<feature type="strand" evidence="22">
    <location>
        <begin position="104"/>
        <end position="108"/>
    </location>
</feature>
<feature type="strand" evidence="22">
    <location>
        <begin position="126"/>
        <end position="132"/>
    </location>
</feature>
<feature type="turn" evidence="22">
    <location>
        <begin position="133"/>
        <end position="138"/>
    </location>
</feature>
<feature type="helix" evidence="22">
    <location>
        <begin position="140"/>
        <end position="156"/>
    </location>
</feature>
<feature type="helix" evidence="22">
    <location>
        <begin position="159"/>
        <end position="169"/>
    </location>
</feature>
<feature type="strand" evidence="21">
    <location>
        <begin position="172"/>
        <end position="174"/>
    </location>
</feature>
<feature type="strand" evidence="22">
    <location>
        <begin position="176"/>
        <end position="183"/>
    </location>
</feature>
<feature type="helix" evidence="22">
    <location>
        <begin position="189"/>
        <end position="191"/>
    </location>
</feature>
<feature type="helix" evidence="22">
    <location>
        <begin position="192"/>
        <end position="208"/>
    </location>
</feature>
<feature type="helix" evidence="22">
    <location>
        <begin position="212"/>
        <end position="214"/>
    </location>
</feature>
<feature type="strand" evidence="22">
    <location>
        <begin position="217"/>
        <end position="227"/>
    </location>
</feature>
<feature type="strand" evidence="22">
    <location>
        <begin position="247"/>
        <end position="250"/>
    </location>
</feature>
<feature type="helix" evidence="22">
    <location>
        <begin position="253"/>
        <end position="259"/>
    </location>
</feature>
<feature type="strand" evidence="22">
    <location>
        <begin position="261"/>
        <end position="267"/>
    </location>
</feature>
<feature type="strand" evidence="22">
    <location>
        <begin position="288"/>
        <end position="297"/>
    </location>
</feature>
<feature type="helix" evidence="22">
    <location>
        <begin position="298"/>
        <end position="300"/>
    </location>
</feature>
<feature type="helix" evidence="22">
    <location>
        <begin position="301"/>
        <end position="312"/>
    </location>
</feature>
<name>BCCIP_HUMAN</name>
<dbReference type="EMBL" id="AB040450">
    <property type="protein sequence ID" value="BAA92927.1"/>
    <property type="molecule type" value="mRNA"/>
</dbReference>
<dbReference type="EMBL" id="AB040451">
    <property type="protein sequence ID" value="BAA92928.1"/>
    <property type="molecule type" value="mRNA"/>
</dbReference>
<dbReference type="EMBL" id="AY064247">
    <property type="protein sequence ID" value="AAL55436.1"/>
    <property type="molecule type" value="Genomic_DNA"/>
</dbReference>
<dbReference type="EMBL" id="AY064247">
    <property type="protein sequence ID" value="AAL55438.1"/>
    <property type="molecule type" value="Genomic_DNA"/>
</dbReference>
<dbReference type="EMBL" id="AY064248">
    <property type="protein sequence ID" value="AAL55439.1"/>
    <property type="molecule type" value="mRNA"/>
</dbReference>
<dbReference type="EMBL" id="AY064249">
    <property type="protein sequence ID" value="AAL55440.1"/>
    <property type="molecule type" value="mRNA"/>
</dbReference>
<dbReference type="EMBL" id="AK055691">
    <property type="protein sequence ID" value="BAG51557.1"/>
    <property type="molecule type" value="mRNA"/>
</dbReference>
<dbReference type="EMBL" id="AL834458">
    <property type="protein sequence ID" value="CAD39118.1"/>
    <property type="molecule type" value="mRNA"/>
</dbReference>
<dbReference type="EMBL" id="AL360176">
    <property type="status" value="NOT_ANNOTATED_CDS"/>
    <property type="molecule type" value="Genomic_DNA"/>
</dbReference>
<dbReference type="EMBL" id="BC009771">
    <property type="protein sequence ID" value="AAH09771.1"/>
    <property type="molecule type" value="mRNA"/>
</dbReference>
<dbReference type="CCDS" id="CCDS7649.1">
    <molecule id="Q9P287-2"/>
</dbReference>
<dbReference type="CCDS" id="CCDS7650.1">
    <molecule id="Q9P287-4"/>
</dbReference>
<dbReference type="CCDS" id="CCDS7651.1">
    <molecule id="Q9P287-1"/>
</dbReference>
<dbReference type="RefSeq" id="NP_057651.1">
    <molecule id="Q9P287-2"/>
    <property type="nucleotide sequence ID" value="NM_016567.4"/>
</dbReference>
<dbReference type="RefSeq" id="NP_510868.1">
    <molecule id="Q9P287-1"/>
    <property type="nucleotide sequence ID" value="NM_078468.3"/>
</dbReference>
<dbReference type="RefSeq" id="NP_510869.1">
    <molecule id="Q9P287-4"/>
    <property type="nucleotide sequence ID" value="NM_078469.3"/>
</dbReference>
<dbReference type="PDB" id="7KYQ">
    <property type="method" value="X-ray"/>
    <property type="resolution" value="3.06 A"/>
    <property type="chains" value="A=61-314"/>
</dbReference>
<dbReference type="PDB" id="7KYS">
    <property type="method" value="X-ray"/>
    <property type="resolution" value="2.20 A"/>
    <property type="chains" value="A/B/C=61-314"/>
</dbReference>
<dbReference type="PDB" id="8EQB">
    <property type="method" value="EM"/>
    <property type="resolution" value="6.50 A"/>
    <property type="chains" value="C/F/I/L=50-259"/>
</dbReference>
<dbReference type="PDB" id="8EXE">
    <property type="method" value="X-ray"/>
    <property type="resolution" value="3.50 A"/>
    <property type="chains" value="B=50-259"/>
</dbReference>
<dbReference type="PDB" id="8EXF">
    <property type="method" value="X-ray"/>
    <property type="resolution" value="3.22 A"/>
    <property type="chains" value="B=50-237"/>
</dbReference>
<dbReference type="PDBsum" id="7KYQ"/>
<dbReference type="PDBsum" id="7KYS"/>
<dbReference type="PDBsum" id="8EQB"/>
<dbReference type="PDBsum" id="8EXE"/>
<dbReference type="PDBsum" id="8EXF"/>
<dbReference type="SMR" id="Q9P287"/>
<dbReference type="BioGRID" id="121161">
    <property type="interactions" value="158"/>
</dbReference>
<dbReference type="CORUM" id="Q9P287"/>
<dbReference type="FunCoup" id="Q9P287">
    <property type="interactions" value="2804"/>
</dbReference>
<dbReference type="IntAct" id="Q9P287">
    <property type="interactions" value="56"/>
</dbReference>
<dbReference type="MINT" id="Q9P287"/>
<dbReference type="STRING" id="9606.ENSP00000357748"/>
<dbReference type="GlyGen" id="Q9P287">
    <property type="glycosylation" value="1 site, 1 O-linked glycan (1 site)"/>
</dbReference>
<dbReference type="iPTMnet" id="Q9P287"/>
<dbReference type="PhosphoSitePlus" id="Q9P287"/>
<dbReference type="BioMuta" id="BCCIP"/>
<dbReference type="DMDM" id="74753124"/>
<dbReference type="jPOST" id="Q9P287"/>
<dbReference type="MassIVE" id="Q9P287"/>
<dbReference type="PaxDb" id="9606-ENSP00000357748"/>
<dbReference type="PeptideAtlas" id="Q9P287"/>
<dbReference type="ProteomicsDB" id="83752">
    <molecule id="Q9P287-1"/>
</dbReference>
<dbReference type="ProteomicsDB" id="83753">
    <molecule id="Q9P287-2"/>
</dbReference>
<dbReference type="ProteomicsDB" id="83754">
    <molecule id="Q9P287-3"/>
</dbReference>
<dbReference type="ProteomicsDB" id="83755">
    <molecule id="Q9P287-4"/>
</dbReference>
<dbReference type="Pumba" id="Q9P287"/>
<dbReference type="Antibodypedia" id="32428">
    <property type="antibodies" value="157 antibodies from 28 providers"/>
</dbReference>
<dbReference type="DNASU" id="56647"/>
<dbReference type="Ensembl" id="ENST00000278100.11">
    <molecule id="Q9P287-1"/>
    <property type="protein sequence ID" value="ENSP00000278100.6"/>
    <property type="gene ID" value="ENSG00000107949.17"/>
</dbReference>
<dbReference type="Ensembl" id="ENST00000299130.7">
    <molecule id="Q9P287-4"/>
    <property type="protein sequence ID" value="ENSP00000299130.3"/>
    <property type="gene ID" value="ENSG00000107949.17"/>
</dbReference>
<dbReference type="Ensembl" id="ENST00000368759.5">
    <molecule id="Q9P287-2"/>
    <property type="protein sequence ID" value="ENSP00000357748.5"/>
    <property type="gene ID" value="ENSG00000107949.17"/>
</dbReference>
<dbReference type="GeneID" id="56647"/>
<dbReference type="KEGG" id="hsa:56647"/>
<dbReference type="MANE-Select" id="ENST00000278100.11">
    <property type="protein sequence ID" value="ENSP00000278100.6"/>
    <property type="RefSeq nucleotide sequence ID" value="NM_078468.3"/>
    <property type="RefSeq protein sequence ID" value="NP_510868.1"/>
</dbReference>
<dbReference type="UCSC" id="uc001ljb.5">
    <molecule id="Q9P287-1"/>
    <property type="organism name" value="human"/>
</dbReference>
<dbReference type="AGR" id="HGNC:978"/>
<dbReference type="CTD" id="56647"/>
<dbReference type="DisGeNET" id="56647"/>
<dbReference type="GeneCards" id="BCCIP"/>
<dbReference type="HGNC" id="HGNC:978">
    <property type="gene designation" value="BCCIP"/>
</dbReference>
<dbReference type="HPA" id="ENSG00000107949">
    <property type="expression patterns" value="Low tissue specificity"/>
</dbReference>
<dbReference type="MIM" id="611883">
    <property type="type" value="gene"/>
</dbReference>
<dbReference type="neXtProt" id="NX_Q9P287"/>
<dbReference type="OpenTargets" id="ENSG00000107949"/>
<dbReference type="PharmGKB" id="PA25290"/>
<dbReference type="VEuPathDB" id="HostDB:ENSG00000107949"/>
<dbReference type="eggNOG" id="KOG3034">
    <property type="taxonomic scope" value="Eukaryota"/>
</dbReference>
<dbReference type="GeneTree" id="ENSGT00390000000696"/>
<dbReference type="HOGENOM" id="CLU_068770_1_1_1"/>
<dbReference type="InParanoid" id="Q9P287"/>
<dbReference type="OMA" id="VKFYRKE"/>
<dbReference type="OrthoDB" id="27543at2759"/>
<dbReference type="PAN-GO" id="Q9P287">
    <property type="GO annotations" value="1 GO annotation based on evolutionary models"/>
</dbReference>
<dbReference type="PhylomeDB" id="Q9P287"/>
<dbReference type="TreeFam" id="TF320301"/>
<dbReference type="PathwayCommons" id="Q9P287"/>
<dbReference type="SignaLink" id="Q9P287"/>
<dbReference type="BioGRID-ORCS" id="56647">
    <property type="hits" value="419 hits in 1167 CRISPR screens"/>
</dbReference>
<dbReference type="CD-CODE" id="91857CE7">
    <property type="entry name" value="Nucleolus"/>
</dbReference>
<dbReference type="CD-CODE" id="DEE660B4">
    <property type="entry name" value="Stress granule"/>
</dbReference>
<dbReference type="ChiTaRS" id="BCCIP">
    <property type="organism name" value="human"/>
</dbReference>
<dbReference type="GeneWiki" id="BCCIP"/>
<dbReference type="GenomeRNAi" id="56647"/>
<dbReference type="Pharos" id="Q9P287">
    <property type="development level" value="Tbio"/>
</dbReference>
<dbReference type="PRO" id="PR:Q9P287"/>
<dbReference type="Proteomes" id="UP000005640">
    <property type="component" value="Chromosome 10"/>
</dbReference>
<dbReference type="RNAct" id="Q9P287">
    <property type="molecule type" value="protein"/>
</dbReference>
<dbReference type="Bgee" id="ENSG00000107949">
    <property type="expression patterns" value="Expressed in ventricular zone and 200 other cell types or tissues"/>
</dbReference>
<dbReference type="GO" id="GO:0005814">
    <property type="term" value="C:centriole"/>
    <property type="evidence" value="ECO:0000314"/>
    <property type="project" value="UniProtKB"/>
</dbReference>
<dbReference type="GO" id="GO:0005813">
    <property type="term" value="C:centrosome"/>
    <property type="evidence" value="ECO:0000314"/>
    <property type="project" value="UniProtKB"/>
</dbReference>
<dbReference type="GO" id="GO:0005829">
    <property type="term" value="C:cytosol"/>
    <property type="evidence" value="ECO:0000314"/>
    <property type="project" value="HPA"/>
</dbReference>
<dbReference type="GO" id="GO:0097431">
    <property type="term" value="C:mitotic spindle pole"/>
    <property type="evidence" value="ECO:0000314"/>
    <property type="project" value="UniProtKB"/>
</dbReference>
<dbReference type="GO" id="GO:0019908">
    <property type="term" value="C:nuclear cyclin-dependent protein kinase holoenzyme complex"/>
    <property type="evidence" value="ECO:0000314"/>
    <property type="project" value="MGI"/>
</dbReference>
<dbReference type="GO" id="GO:0005654">
    <property type="term" value="C:nucleoplasm"/>
    <property type="evidence" value="ECO:0000314"/>
    <property type="project" value="HPA"/>
</dbReference>
<dbReference type="GO" id="GO:0005634">
    <property type="term" value="C:nucleus"/>
    <property type="evidence" value="ECO:0000318"/>
    <property type="project" value="GO_Central"/>
</dbReference>
<dbReference type="GO" id="GO:0019207">
    <property type="term" value="F:kinase regulator activity"/>
    <property type="evidence" value="ECO:0000314"/>
    <property type="project" value="MGI"/>
</dbReference>
<dbReference type="GO" id="GO:0003723">
    <property type="term" value="F:RNA binding"/>
    <property type="evidence" value="ECO:0007005"/>
    <property type="project" value="UniProtKB"/>
</dbReference>
<dbReference type="GO" id="GO:0015631">
    <property type="term" value="F:tubulin binding"/>
    <property type="evidence" value="ECO:0000314"/>
    <property type="project" value="UniProtKB"/>
</dbReference>
<dbReference type="GO" id="GO:0006281">
    <property type="term" value="P:DNA repair"/>
    <property type="evidence" value="ECO:0007669"/>
    <property type="project" value="UniProtKB-KW"/>
</dbReference>
<dbReference type="GO" id="GO:0000132">
    <property type="term" value="P:establishment of mitotic spindle orientation"/>
    <property type="evidence" value="ECO:0000315"/>
    <property type="project" value="UniProtKB"/>
</dbReference>
<dbReference type="GO" id="GO:0034453">
    <property type="term" value="P:microtubule anchoring"/>
    <property type="evidence" value="ECO:0000315"/>
    <property type="project" value="UniProtKB"/>
</dbReference>
<dbReference type="GO" id="GO:0000226">
    <property type="term" value="P:microtubule cytoskeleton organization"/>
    <property type="evidence" value="ECO:0000315"/>
    <property type="project" value="UniProtKB"/>
</dbReference>
<dbReference type="GO" id="GO:0090307">
    <property type="term" value="P:mitotic spindle assembly"/>
    <property type="evidence" value="ECO:0000315"/>
    <property type="project" value="UniProtKB"/>
</dbReference>
<dbReference type="GO" id="GO:0007052">
    <property type="term" value="P:mitotic spindle organization"/>
    <property type="evidence" value="ECO:0000315"/>
    <property type="project" value="UniProtKB"/>
</dbReference>
<dbReference type="GO" id="GO:0061101">
    <property type="term" value="P:neuroendocrine cell differentiation"/>
    <property type="evidence" value="ECO:0000314"/>
    <property type="project" value="UniProtKB"/>
</dbReference>
<dbReference type="GO" id="GO:0000079">
    <property type="term" value="P:regulation of cyclin-dependent protein serine/threonine kinase activity"/>
    <property type="evidence" value="ECO:0000314"/>
    <property type="project" value="MGI"/>
</dbReference>
<dbReference type="InterPro" id="IPR025602">
    <property type="entry name" value="BCP1_family"/>
</dbReference>
<dbReference type="PANTHER" id="PTHR13261">
    <property type="entry name" value="BRCA2 AND CDKN1A INTERACTING PROTEIN"/>
    <property type="match status" value="1"/>
</dbReference>
<dbReference type="PANTHER" id="PTHR13261:SF0">
    <property type="entry name" value="BRCA2 AND CDKN1A-INTERACTING PROTEIN"/>
    <property type="match status" value="1"/>
</dbReference>
<dbReference type="Pfam" id="PF13862">
    <property type="entry name" value="BCCIP"/>
    <property type="match status" value="1"/>
</dbReference>
<dbReference type="PIRSF" id="PIRSF028983">
    <property type="entry name" value="BCP1"/>
    <property type="match status" value="1"/>
</dbReference>
<protein>
    <recommendedName>
        <fullName>BRCA2 and CDKN1A-interacting protein</fullName>
    </recommendedName>
    <alternativeName>
        <fullName>P21- and CDK-associated protein 1</fullName>
    </alternativeName>
    <alternativeName>
        <fullName>Protein TOK-1</fullName>
    </alternativeName>
</protein>
<keyword id="KW-0002">3D-structure</keyword>
<keyword id="KW-0025">Alternative splicing</keyword>
<keyword id="KW-0131">Cell cycle</keyword>
<keyword id="KW-0963">Cytoplasm</keyword>
<keyword id="KW-0206">Cytoskeleton</keyword>
<keyword id="KW-0227">DNA damage</keyword>
<keyword id="KW-0234">DNA repair</keyword>
<keyword id="KW-0539">Nucleus</keyword>
<keyword id="KW-0597">Phosphoprotein</keyword>
<keyword id="KW-1267">Proteomics identification</keyword>
<keyword id="KW-1185">Reference proteome</keyword>
<gene>
    <name type="primary">BCCIP</name>
    <name type="synonym">TOK1</name>
</gene>
<proteinExistence type="evidence at protein level"/>
<organism>
    <name type="scientific">Homo sapiens</name>
    <name type="common">Human</name>
    <dbReference type="NCBI Taxonomy" id="9606"/>
    <lineage>
        <taxon>Eukaryota</taxon>
        <taxon>Metazoa</taxon>
        <taxon>Chordata</taxon>
        <taxon>Craniata</taxon>
        <taxon>Vertebrata</taxon>
        <taxon>Euteleostomi</taxon>
        <taxon>Mammalia</taxon>
        <taxon>Eutheria</taxon>
        <taxon>Euarchontoglires</taxon>
        <taxon>Primates</taxon>
        <taxon>Haplorrhini</taxon>
        <taxon>Catarrhini</taxon>
        <taxon>Hominidae</taxon>
        <taxon>Homo</taxon>
    </lineage>
</organism>
<evidence type="ECO:0000250" key="1">
    <source>
        <dbReference type="UniProtKB" id="Q9CWI3"/>
    </source>
</evidence>
<evidence type="ECO:0000256" key="2">
    <source>
        <dbReference type="SAM" id="MobiDB-lite"/>
    </source>
</evidence>
<evidence type="ECO:0000269" key="3">
    <source>
    </source>
</evidence>
<evidence type="ECO:0000269" key="4">
    <source>
    </source>
</evidence>
<evidence type="ECO:0000269" key="5">
    <source>
    </source>
</evidence>
<evidence type="ECO:0000269" key="6">
    <source>
    </source>
</evidence>
<evidence type="ECO:0000269" key="7">
    <source>
    </source>
</evidence>
<evidence type="ECO:0000269" key="8">
    <source>
    </source>
</evidence>
<evidence type="ECO:0000269" key="9">
    <source>
    </source>
</evidence>
<evidence type="ECO:0000269" key="10">
    <source>
    </source>
</evidence>
<evidence type="ECO:0000269" key="11">
    <source>
    </source>
</evidence>
<evidence type="ECO:0000303" key="12">
    <source>
    </source>
</evidence>
<evidence type="ECO:0000303" key="13">
    <source>
    </source>
</evidence>
<evidence type="ECO:0000303" key="14">
    <source>
    </source>
</evidence>
<evidence type="ECO:0000303" key="15">
    <source>
    </source>
</evidence>
<evidence type="ECO:0000305" key="16"/>
<evidence type="ECO:0007744" key="17">
    <source>
    </source>
</evidence>
<evidence type="ECO:0007744" key="18">
    <source>
    </source>
</evidence>
<evidence type="ECO:0007744" key="19">
    <source>
    </source>
</evidence>
<evidence type="ECO:0007744" key="20">
    <source>
    </source>
</evidence>
<evidence type="ECO:0007829" key="21">
    <source>
        <dbReference type="PDB" id="7KYQ"/>
    </source>
</evidence>
<evidence type="ECO:0007829" key="22">
    <source>
        <dbReference type="PDB" id="7KYS"/>
    </source>
</evidence>
<accession>Q9P287</accession>
<accession>B3KP45</accession>
<accession>Q8ND15</accession>
<accession>Q96GC4</accession>
<accession>Q9P288</accession>
<reference key="1">
    <citation type="journal article" date="2000" name="J. Biol. Chem.">
        <title>TOK-1, a novel p21Cip1-binding protein that cooperatively enhances p21-dependent inhibitory activity toward CDK2 kinase.</title>
        <authorList>
            <person name="Ono T."/>
            <person name="Kitaura H."/>
            <person name="Ugai H."/>
            <person name="Murata T."/>
            <person name="Yokoyama K.K."/>
            <person name="Iguchi-Ariga S.M.M."/>
            <person name="Ariga H."/>
        </authorList>
    </citation>
    <scope>NUCLEOTIDE SEQUENCE [MRNA] (ISOFORMS 1 AND 2)</scope>
    <scope>FUNCTION</scope>
    <scope>INTERACTION WITH CDKN1A</scope>
    <scope>SUBCELLULAR LOCATION</scope>
    <scope>TISSUE SPECIFICITY</scope>
    <scope>DEVELOPMENTAL STAGE</scope>
    <source>
        <tissue>Brain</tissue>
    </source>
</reference>
<reference key="2">
    <citation type="journal article" date="2003" name="Gene">
        <title>Genomic structure of the human BCCIP gene and its expression in cancer.</title>
        <authorList>
            <person name="Meng X."/>
            <person name="Liu J."/>
            <person name="Shen Z."/>
        </authorList>
    </citation>
    <scope>NUCLEOTIDE SEQUENCE [GENOMIC DNA / MRNA] (ISOFORMS 1 AND 2)</scope>
</reference>
<reference key="3">
    <citation type="journal article" date="2004" name="Nat. Genet.">
        <title>Complete sequencing and characterization of 21,243 full-length human cDNAs.</title>
        <authorList>
            <person name="Ota T."/>
            <person name="Suzuki Y."/>
            <person name="Nishikawa T."/>
            <person name="Otsuki T."/>
            <person name="Sugiyama T."/>
            <person name="Irie R."/>
            <person name="Wakamatsu A."/>
            <person name="Hayashi K."/>
            <person name="Sato H."/>
            <person name="Nagai K."/>
            <person name="Kimura K."/>
            <person name="Makita H."/>
            <person name="Sekine M."/>
            <person name="Obayashi M."/>
            <person name="Nishi T."/>
            <person name="Shibahara T."/>
            <person name="Tanaka T."/>
            <person name="Ishii S."/>
            <person name="Yamamoto J."/>
            <person name="Saito K."/>
            <person name="Kawai Y."/>
            <person name="Isono Y."/>
            <person name="Nakamura Y."/>
            <person name="Nagahari K."/>
            <person name="Murakami K."/>
            <person name="Yasuda T."/>
            <person name="Iwayanagi T."/>
            <person name="Wagatsuma M."/>
            <person name="Shiratori A."/>
            <person name="Sudo H."/>
            <person name="Hosoiri T."/>
            <person name="Kaku Y."/>
            <person name="Kodaira H."/>
            <person name="Kondo H."/>
            <person name="Sugawara M."/>
            <person name="Takahashi M."/>
            <person name="Kanda K."/>
            <person name="Yokoi T."/>
            <person name="Furuya T."/>
            <person name="Kikkawa E."/>
            <person name="Omura Y."/>
            <person name="Abe K."/>
            <person name="Kamihara K."/>
            <person name="Katsuta N."/>
            <person name="Sato K."/>
            <person name="Tanikawa M."/>
            <person name="Yamazaki M."/>
            <person name="Ninomiya K."/>
            <person name="Ishibashi T."/>
            <person name="Yamashita H."/>
            <person name="Murakawa K."/>
            <person name="Fujimori K."/>
            <person name="Tanai H."/>
            <person name="Kimata M."/>
            <person name="Watanabe M."/>
            <person name="Hiraoka S."/>
            <person name="Chiba Y."/>
            <person name="Ishida S."/>
            <person name="Ono Y."/>
            <person name="Takiguchi S."/>
            <person name="Watanabe S."/>
            <person name="Yosida M."/>
            <person name="Hotuta T."/>
            <person name="Kusano J."/>
            <person name="Kanehori K."/>
            <person name="Takahashi-Fujii A."/>
            <person name="Hara H."/>
            <person name="Tanase T.-O."/>
            <person name="Nomura Y."/>
            <person name="Togiya S."/>
            <person name="Komai F."/>
            <person name="Hara R."/>
            <person name="Takeuchi K."/>
            <person name="Arita M."/>
            <person name="Imose N."/>
            <person name="Musashino K."/>
            <person name="Yuuki H."/>
            <person name="Oshima A."/>
            <person name="Sasaki N."/>
            <person name="Aotsuka S."/>
            <person name="Yoshikawa Y."/>
            <person name="Matsunawa H."/>
            <person name="Ichihara T."/>
            <person name="Shiohata N."/>
            <person name="Sano S."/>
            <person name="Moriya S."/>
            <person name="Momiyama H."/>
            <person name="Satoh N."/>
            <person name="Takami S."/>
            <person name="Terashima Y."/>
            <person name="Suzuki O."/>
            <person name="Nakagawa S."/>
            <person name="Senoh A."/>
            <person name="Mizoguchi H."/>
            <person name="Goto Y."/>
            <person name="Shimizu F."/>
            <person name="Wakebe H."/>
            <person name="Hishigaki H."/>
            <person name="Watanabe T."/>
            <person name="Sugiyama A."/>
            <person name="Takemoto M."/>
            <person name="Kawakami B."/>
            <person name="Yamazaki M."/>
            <person name="Watanabe K."/>
            <person name="Kumagai A."/>
            <person name="Itakura S."/>
            <person name="Fukuzumi Y."/>
            <person name="Fujimori Y."/>
            <person name="Komiyama M."/>
            <person name="Tashiro H."/>
            <person name="Tanigami A."/>
            <person name="Fujiwara T."/>
            <person name="Ono T."/>
            <person name="Yamada K."/>
            <person name="Fujii Y."/>
            <person name="Ozaki K."/>
            <person name="Hirao M."/>
            <person name="Ohmori Y."/>
            <person name="Kawabata A."/>
            <person name="Hikiji T."/>
            <person name="Kobatake N."/>
            <person name="Inagaki H."/>
            <person name="Ikema Y."/>
            <person name="Okamoto S."/>
            <person name="Okitani R."/>
            <person name="Kawakami T."/>
            <person name="Noguchi S."/>
            <person name="Itoh T."/>
            <person name="Shigeta K."/>
            <person name="Senba T."/>
            <person name="Matsumura K."/>
            <person name="Nakajima Y."/>
            <person name="Mizuno T."/>
            <person name="Morinaga M."/>
            <person name="Sasaki M."/>
            <person name="Togashi T."/>
            <person name="Oyama M."/>
            <person name="Hata H."/>
            <person name="Watanabe M."/>
            <person name="Komatsu T."/>
            <person name="Mizushima-Sugano J."/>
            <person name="Satoh T."/>
            <person name="Shirai Y."/>
            <person name="Takahashi Y."/>
            <person name="Nakagawa K."/>
            <person name="Okumura K."/>
            <person name="Nagase T."/>
            <person name="Nomura N."/>
            <person name="Kikuchi H."/>
            <person name="Masuho Y."/>
            <person name="Yamashita R."/>
            <person name="Nakai K."/>
            <person name="Yada T."/>
            <person name="Nakamura Y."/>
            <person name="Ohara O."/>
            <person name="Isogai T."/>
            <person name="Sugano S."/>
        </authorList>
    </citation>
    <scope>NUCLEOTIDE SEQUENCE [LARGE SCALE MRNA] (ISOFORM 4)</scope>
</reference>
<reference key="4">
    <citation type="journal article" date="2007" name="BMC Genomics">
        <title>The full-ORF clone resource of the German cDNA consortium.</title>
        <authorList>
            <person name="Bechtel S."/>
            <person name="Rosenfelder H."/>
            <person name="Duda A."/>
            <person name="Schmidt C.P."/>
            <person name="Ernst U."/>
            <person name="Wellenreuther R."/>
            <person name="Mehrle A."/>
            <person name="Schuster C."/>
            <person name="Bahr A."/>
            <person name="Bloecker H."/>
            <person name="Heubner D."/>
            <person name="Hoerlein A."/>
            <person name="Michel G."/>
            <person name="Wedler H."/>
            <person name="Koehrer K."/>
            <person name="Ottenwaelder B."/>
            <person name="Poustka A."/>
            <person name="Wiemann S."/>
            <person name="Schupp I."/>
        </authorList>
    </citation>
    <scope>NUCLEOTIDE SEQUENCE [LARGE SCALE MRNA] (ISOFORM 3)</scope>
    <source>
        <tissue>Brain</tissue>
    </source>
</reference>
<reference key="5">
    <citation type="journal article" date="2004" name="Nature">
        <title>The DNA sequence and comparative analysis of human chromosome 10.</title>
        <authorList>
            <person name="Deloukas P."/>
            <person name="Earthrowl M.E."/>
            <person name="Grafham D.V."/>
            <person name="Rubenfield M."/>
            <person name="French L."/>
            <person name="Steward C.A."/>
            <person name="Sims S.K."/>
            <person name="Jones M.C."/>
            <person name="Searle S."/>
            <person name="Scott C."/>
            <person name="Howe K."/>
            <person name="Hunt S.E."/>
            <person name="Andrews T.D."/>
            <person name="Gilbert J.G.R."/>
            <person name="Swarbreck D."/>
            <person name="Ashurst J.L."/>
            <person name="Taylor A."/>
            <person name="Battles J."/>
            <person name="Bird C.P."/>
            <person name="Ainscough R."/>
            <person name="Almeida J.P."/>
            <person name="Ashwell R.I.S."/>
            <person name="Ambrose K.D."/>
            <person name="Babbage A.K."/>
            <person name="Bagguley C.L."/>
            <person name="Bailey J."/>
            <person name="Banerjee R."/>
            <person name="Bates K."/>
            <person name="Beasley H."/>
            <person name="Bray-Allen S."/>
            <person name="Brown A.J."/>
            <person name="Brown J.Y."/>
            <person name="Burford D.C."/>
            <person name="Burrill W."/>
            <person name="Burton J."/>
            <person name="Cahill P."/>
            <person name="Camire D."/>
            <person name="Carter N.P."/>
            <person name="Chapman J.C."/>
            <person name="Clark S.Y."/>
            <person name="Clarke G."/>
            <person name="Clee C.M."/>
            <person name="Clegg S."/>
            <person name="Corby N."/>
            <person name="Coulson A."/>
            <person name="Dhami P."/>
            <person name="Dutta I."/>
            <person name="Dunn M."/>
            <person name="Faulkner L."/>
            <person name="Frankish A."/>
            <person name="Frankland J.A."/>
            <person name="Garner P."/>
            <person name="Garnett J."/>
            <person name="Gribble S."/>
            <person name="Griffiths C."/>
            <person name="Grocock R."/>
            <person name="Gustafson E."/>
            <person name="Hammond S."/>
            <person name="Harley J.L."/>
            <person name="Hart E."/>
            <person name="Heath P.D."/>
            <person name="Ho T.P."/>
            <person name="Hopkins B."/>
            <person name="Horne J."/>
            <person name="Howden P.J."/>
            <person name="Huckle E."/>
            <person name="Hynds C."/>
            <person name="Johnson C."/>
            <person name="Johnson D."/>
            <person name="Kana A."/>
            <person name="Kay M."/>
            <person name="Kimberley A.M."/>
            <person name="Kershaw J.K."/>
            <person name="Kokkinaki M."/>
            <person name="Laird G.K."/>
            <person name="Lawlor S."/>
            <person name="Lee H.M."/>
            <person name="Leongamornlert D.A."/>
            <person name="Laird G."/>
            <person name="Lloyd C."/>
            <person name="Lloyd D.M."/>
            <person name="Loveland J."/>
            <person name="Lovell J."/>
            <person name="McLaren S."/>
            <person name="McLay K.E."/>
            <person name="McMurray A."/>
            <person name="Mashreghi-Mohammadi M."/>
            <person name="Matthews L."/>
            <person name="Milne S."/>
            <person name="Nickerson T."/>
            <person name="Nguyen M."/>
            <person name="Overton-Larty E."/>
            <person name="Palmer S.A."/>
            <person name="Pearce A.V."/>
            <person name="Peck A.I."/>
            <person name="Pelan S."/>
            <person name="Phillimore B."/>
            <person name="Porter K."/>
            <person name="Rice C.M."/>
            <person name="Rogosin A."/>
            <person name="Ross M.T."/>
            <person name="Sarafidou T."/>
            <person name="Sehra H.K."/>
            <person name="Shownkeen R."/>
            <person name="Skuce C.D."/>
            <person name="Smith M."/>
            <person name="Standring L."/>
            <person name="Sycamore N."/>
            <person name="Tester J."/>
            <person name="Thorpe A."/>
            <person name="Torcasso W."/>
            <person name="Tracey A."/>
            <person name="Tromans A."/>
            <person name="Tsolas J."/>
            <person name="Wall M."/>
            <person name="Walsh J."/>
            <person name="Wang H."/>
            <person name="Weinstock K."/>
            <person name="West A.P."/>
            <person name="Willey D.L."/>
            <person name="Whitehead S.L."/>
            <person name="Wilming L."/>
            <person name="Wray P.W."/>
            <person name="Young L."/>
            <person name="Chen Y."/>
            <person name="Lovering R.C."/>
            <person name="Moschonas N.K."/>
            <person name="Siebert R."/>
            <person name="Fechtel K."/>
            <person name="Bentley D."/>
            <person name="Durbin R.M."/>
            <person name="Hubbard T."/>
            <person name="Doucette-Stamm L."/>
            <person name="Beck S."/>
            <person name="Smith D.R."/>
            <person name="Rogers J."/>
        </authorList>
    </citation>
    <scope>NUCLEOTIDE SEQUENCE [LARGE SCALE GENOMIC DNA]</scope>
</reference>
<reference key="6">
    <citation type="journal article" date="2004" name="Genome Res.">
        <title>The status, quality, and expansion of the NIH full-length cDNA project: the Mammalian Gene Collection (MGC).</title>
        <authorList>
            <consortium name="The MGC Project Team"/>
        </authorList>
    </citation>
    <scope>NUCLEOTIDE SEQUENCE [LARGE SCALE MRNA] (ISOFORM 1)</scope>
    <source>
        <tissue>Brain</tissue>
    </source>
</reference>
<reference key="7">
    <citation type="journal article" date="2001" name="Oncogene">
        <title>Inhibition of breast and brain cancer cell growth by BCCIPalpha, an evolutionarily conserved nuclear protein that interacts with BRCA2.</title>
        <authorList>
            <person name="Liu J."/>
            <person name="Yuan Y."/>
            <person name="Huan J."/>
            <person name="Shen Z."/>
        </authorList>
    </citation>
    <scope>INTERACTION WITH BRCA2</scope>
    <scope>SUBCELLULAR LOCATION</scope>
    <scope>TISSUE SPECIFICITY</scope>
</reference>
<reference key="8">
    <citation type="journal article" date="2004" name="Cell Cycle">
        <title>Inhibition of G1 to S cell cycle progression by BCCIP beta.</title>
        <authorList>
            <person name="Meng X."/>
            <person name="Liu J."/>
            <person name="Shen Z."/>
        </authorList>
    </citation>
    <scope>FUNCTION</scope>
    <scope>INTERACTION WITH CDKN1A</scope>
</reference>
<reference key="9">
    <citation type="journal article" date="2004" name="Cell Cycle">
        <title>BCCIP functions through p53 to regulate the expression of p21Waf1/Cip1.</title>
        <authorList>
            <person name="Meng X."/>
            <person name="Lu H."/>
            <person name="Shen Z."/>
        </authorList>
    </citation>
    <scope>FUNCTION</scope>
</reference>
<reference key="10">
    <citation type="journal article" date="2005" name="Mol. Cell. Biol.">
        <title>The BRCA2-interacting protein BCCIP functions in RAD51 and BRCA2 focus formation and homologous recombinational repair.</title>
        <authorList>
            <person name="Lu H."/>
            <person name="Guo X."/>
            <person name="Meng X."/>
            <person name="Liu J."/>
            <person name="Allen C."/>
            <person name="Wray J."/>
            <person name="Nickoloff J.A."/>
            <person name="Shen Z."/>
        </authorList>
    </citation>
    <scope>FUNCTION</scope>
    <scope>INTERACTION WITH BRCA2</scope>
    <scope>SUBCELLULAR LOCATION</scope>
</reference>
<reference key="11">
    <citation type="journal article" date="2006" name="Cell">
        <title>Global, in vivo, and site-specific phosphorylation dynamics in signaling networks.</title>
        <authorList>
            <person name="Olsen J.V."/>
            <person name="Blagoev B."/>
            <person name="Gnad F."/>
            <person name="Macek B."/>
            <person name="Kumar C."/>
            <person name="Mortensen P."/>
            <person name="Mann M."/>
        </authorList>
    </citation>
    <scope>PHOSPHORYLATION [LARGE SCALE ANALYSIS] AT SER-42</scope>
    <scope>IDENTIFICATION BY MASS SPECTROMETRY [LARGE SCALE ANALYSIS]</scope>
    <source>
        <tissue>Cervix carcinoma</tissue>
    </source>
</reference>
<reference key="12">
    <citation type="journal article" date="2007" name="Nucleic Acids Res.">
        <title>BCCIP regulates homologous recombination by distinct domains and suppresses spontaneous DNA damage.</title>
        <authorList>
            <person name="Lu H."/>
            <person name="Yue J."/>
            <person name="Meng X."/>
            <person name="Nickoloff J.A."/>
            <person name="Shen Z."/>
        </authorList>
    </citation>
    <scope>FUNCTION</scope>
</reference>
<reference key="13">
    <citation type="journal article" date="2008" name="Biochem. Biophys. Res. Commun.">
        <title>LYRIC/AEG-1 overexpression modulates BCCIPalpha protein levels in prostate tumor cells.</title>
        <authorList>
            <person name="Ash S.C."/>
            <person name="Yang D.Q."/>
            <person name="Britt D.E."/>
        </authorList>
    </citation>
    <scope>INTERACTION WITH MTDH</scope>
</reference>
<reference key="14">
    <citation type="journal article" date="2009" name="Sci. Signal.">
        <title>Quantitative phosphoproteomic analysis of T cell receptor signaling reveals system-wide modulation of protein-protein interactions.</title>
        <authorList>
            <person name="Mayya V."/>
            <person name="Lundgren D.H."/>
            <person name="Hwang S.-I."/>
            <person name="Rezaul K."/>
            <person name="Wu L."/>
            <person name="Eng J.K."/>
            <person name="Rodionov V."/>
            <person name="Han D.K."/>
        </authorList>
    </citation>
    <scope>IDENTIFICATION BY MASS SPECTROMETRY [LARGE SCALE ANALYSIS]</scope>
    <source>
        <tissue>Leukemic T-cell</tissue>
    </source>
</reference>
<reference key="15">
    <citation type="journal article" date="2010" name="Sci. Signal.">
        <title>Quantitative phosphoproteomics reveals widespread full phosphorylation site occupancy during mitosis.</title>
        <authorList>
            <person name="Olsen J.V."/>
            <person name="Vermeulen M."/>
            <person name="Santamaria A."/>
            <person name="Kumar C."/>
            <person name="Miller M.L."/>
            <person name="Jensen L.J."/>
            <person name="Gnad F."/>
            <person name="Cox J."/>
            <person name="Jensen T.S."/>
            <person name="Nigg E.A."/>
            <person name="Brunak S."/>
            <person name="Mann M."/>
        </authorList>
    </citation>
    <scope>PHOSPHORYLATION [LARGE SCALE ANALYSIS] AT SER-42</scope>
    <scope>IDENTIFICATION BY MASS SPECTROMETRY [LARGE SCALE ANALYSIS]</scope>
    <source>
        <tissue>Cervix carcinoma</tissue>
    </source>
</reference>
<reference key="16">
    <citation type="journal article" date="2011" name="BMC Syst. Biol.">
        <title>Initial characterization of the human central proteome.</title>
        <authorList>
            <person name="Burkard T.R."/>
            <person name="Planyavsky M."/>
            <person name="Kaupe I."/>
            <person name="Breitwieser F.P."/>
            <person name="Buerckstuemmer T."/>
            <person name="Bennett K.L."/>
            <person name="Superti-Furga G."/>
            <person name="Colinge J."/>
        </authorList>
    </citation>
    <scope>IDENTIFICATION BY MASS SPECTROMETRY [LARGE SCALE ANALYSIS]</scope>
</reference>
<reference key="17">
    <citation type="journal article" date="2011" name="Sci. Signal.">
        <title>System-wide temporal characterization of the proteome and phosphoproteome of human embryonic stem cell differentiation.</title>
        <authorList>
            <person name="Rigbolt K.T."/>
            <person name="Prokhorova T.A."/>
            <person name="Akimov V."/>
            <person name="Henningsen J."/>
            <person name="Johansen P.T."/>
            <person name="Kratchmarova I."/>
            <person name="Kassem M."/>
            <person name="Mann M."/>
            <person name="Olsen J.V."/>
            <person name="Blagoev B."/>
        </authorList>
    </citation>
    <scope>PHOSPHORYLATION [LARGE SCALE ANALYSIS] AT SER-42</scope>
    <scope>IDENTIFICATION BY MASS SPECTROMETRY [LARGE SCALE ANALYSIS]</scope>
</reference>
<reference key="18">
    <citation type="journal article" date="2014" name="J. Proteomics">
        <title>An enzyme assisted RP-RPLC approach for in-depth analysis of human liver phosphoproteome.</title>
        <authorList>
            <person name="Bian Y."/>
            <person name="Song C."/>
            <person name="Cheng K."/>
            <person name="Dong M."/>
            <person name="Wang F."/>
            <person name="Huang J."/>
            <person name="Sun D."/>
            <person name="Wang L."/>
            <person name="Ye M."/>
            <person name="Zou H."/>
        </authorList>
    </citation>
    <scope>PHOSPHORYLATION [LARGE SCALE ANALYSIS] AT SER-112</scope>
    <scope>IDENTIFICATION BY MASS SPECTROMETRY [LARGE SCALE ANALYSIS]</scope>
    <source>
        <tissue>Liver</tissue>
    </source>
</reference>
<reference key="19">
    <citation type="journal article" date="2017" name="Nat. Commun.">
        <title>The non-canonical poly(A) polymerase FAM46C acts as an onco-suppressor in multiple myeloma.</title>
        <authorList>
            <person name="Mroczek S."/>
            <person name="Chlebowska J."/>
            <person name="Kulinski T.M."/>
            <person name="Gewartowska O."/>
            <person name="Gruchota J."/>
            <person name="Cysewski D."/>
            <person name="Liudkovska V."/>
            <person name="Borsuk E."/>
            <person name="Nowis D."/>
            <person name="Dziembowski A."/>
        </authorList>
    </citation>
    <scope>INTERACTION WITH TENT5C</scope>
</reference>
<reference key="20">
    <citation type="journal article" date="2017" name="Oncogene">
        <title>Regulation of spindle integrity and mitotic fidelity by BCCIP.</title>
        <authorList>
            <person name="Huhn S.C."/>
            <person name="Liu J."/>
            <person name="Ye C."/>
            <person name="Lu H."/>
            <person name="Jiang X."/>
            <person name="Feng X."/>
            <person name="Ganesan S."/>
            <person name="White E."/>
            <person name="Shen Z."/>
        </authorList>
    </citation>
    <scope>FUNCTION</scope>
    <scope>INTERACTION WITH DCTN1; ACTR1A AND TUBULINS</scope>
    <scope>SUBCELLULAR LOCATION</scope>
</reference>
<comment type="function">
    <text evidence="3 5 6 7 8 10">During interphase, required for microtubule organizing and anchoring activities. During mitosis, required for the organization and stabilization of the spindle pole (PubMed:28394342). Isoform 2/alpha is particularly important for the regulation of microtubule anchoring, microtubule stability, spindle architecture and spindle orientation, compared to isoform 1/beta (PubMed:28394342). May promote cell cycle arrest by enhancing the inhibition of CDK2 activity by CDKN1A. May be required for repair of DNA damage by homologous recombination in conjunction with BRCA2. May not be involved in non-homologous end joining (NHEJ).</text>
</comment>
<comment type="subunit">
    <text evidence="3 4 5 7 9 10 11">Interacts with BRCA2, CDKN1A and MTDH/LYRIC (PubMed:10878006, PubMed:11313963, PubMed:14726710, PubMed:15713648, PubMed:18440304). Isoform 2/alpha, but not isoform 1/beta, interacts with DCTN1/p150-glued and ACTR1A/ARP1 (PubMed:28394342). Both isoform 1 and isoform 2 interact with alpha-, beta- and gamma-tubulins (PubMed:28394342). Interacts with TENT5C; the interaction has no effect on TENT5C poly(A) polymerase function (PubMed:28931820).</text>
</comment>
<comment type="interaction">
    <interactant intactId="EBI-711154">
        <id>Q9P287</id>
    </interactant>
    <interactant intactId="EBI-946194">
        <id>Q9HC77</id>
        <label>CENPJ</label>
    </interactant>
    <organismsDiffer>false</organismsDiffer>
    <experiments>3</experiments>
</comment>
<comment type="interaction">
    <interactant intactId="EBI-711154">
        <id>Q9P287</id>
    </interactant>
    <interactant intactId="EBI-5455734">
        <id>Q9Y324</id>
        <label>FCF1</label>
    </interactant>
    <organismsDiffer>false</organismsDiffer>
    <experiments>3</experiments>
</comment>
<comment type="interaction">
    <interactant intactId="EBI-711154">
        <id>Q9P287</id>
    </interactant>
    <interactant intactId="EBI-721385">
        <id>P82933</id>
        <label>MRPS9</label>
    </interactant>
    <organismsDiffer>false</organismsDiffer>
    <experiments>3</experiments>
</comment>
<comment type="interaction">
    <interactant intactId="EBI-711154">
        <id>Q9P287</id>
    </interactant>
    <interactant intactId="EBI-1554925">
        <id>P01127</id>
        <label>PDGFB</label>
    </interactant>
    <organismsDiffer>false</organismsDiffer>
    <experiments>3</experiments>
</comment>
<comment type="interaction">
    <interactant intactId="EBI-711154">
        <id>Q9P287</id>
    </interactant>
    <interactant intactId="EBI-9512693">
        <id>Q53GL6</id>
        <label>RALY</label>
    </interactant>
    <organismsDiffer>false</organismsDiffer>
    <experiments>3</experiments>
</comment>
<comment type="interaction">
    <interactant intactId="EBI-711154">
        <id>Q9P287</id>
    </interactant>
    <interactant intactId="EBI-353303">
        <id>P62829</id>
        <label>RPL23</label>
    </interactant>
    <organismsDiffer>false</organismsDiffer>
    <experiments>8</experiments>
</comment>
<comment type="interaction">
    <interactant intactId="EBI-711154">
        <id>Q9P287</id>
    </interactant>
    <interactant intactId="EBI-359141">
        <id>P63173</id>
        <label>RPL38</label>
    </interactant>
    <organismsDiffer>false</organismsDiffer>
    <experiments>3</experiments>
</comment>
<comment type="interaction">
    <interactant intactId="EBI-711154">
        <id>Q9P287</id>
    </interactant>
    <interactant intactId="EBI-10746567">
        <id>P52744</id>
        <label>ZNF138</label>
    </interactant>
    <organismsDiffer>false</organismsDiffer>
    <experiments>3</experiments>
</comment>
<comment type="interaction">
    <interactant intactId="EBI-711154">
        <id>Q9P287</id>
    </interactant>
    <interactant intactId="EBI-12884200">
        <id>P17023</id>
        <label>ZNF19</label>
    </interactant>
    <organismsDiffer>false</organismsDiffer>
    <experiments>3</experiments>
</comment>
<comment type="subcellular location">
    <subcellularLocation>
        <location evidence="3 4 7">Nucleus</location>
    </subcellularLocation>
    <subcellularLocation>
        <location evidence="10">Cytoplasm</location>
        <location evidence="10">Cytoskeleton</location>
        <location evidence="10">Microtubule organizing center</location>
        <location evidence="10">Centrosome</location>
        <location evidence="10">Centriole</location>
    </subcellularLocation>
    <subcellularLocation>
        <location evidence="10">Cytoplasm</location>
        <location evidence="10">Cytoskeleton</location>
        <location evidence="10">Spindle pole</location>
    </subcellularLocation>
    <text evidence="7 10">Colocalizes with BRCA2 in discrete nuclear foci (PubMed:15713648). In interphase, preferential localizes to the mother centriole (PubMed:28394342). Recruited to the spindle pole matrix and centrosome by microtubules and dynein/dynactin activity (PubMed:28394342).</text>
</comment>
<comment type="subcellular location">
    <molecule>Isoform 1</molecule>
    <subcellularLocation>
        <location evidence="10">Cytoplasm</location>
        <location evidence="10">Cytoskeleton</location>
        <location evidence="10">Microtubule organizing center</location>
        <location evidence="10">Centrosome</location>
    </subcellularLocation>
    <subcellularLocation>
        <location evidence="10">Cytoplasm</location>
        <location evidence="10">Cytoskeleton</location>
        <location evidence="10">Spindle pole</location>
    </subcellularLocation>
    <text evidence="10">Isoform 1/beta tends to be less abundant at, and less strongly associated with, centrosomes than isoform 2/alpha.</text>
</comment>
<comment type="subcellular location">
    <molecule>Isoform 2</molecule>
    <subcellularLocation>
        <location evidence="10">Cytoplasm</location>
        <location evidence="10">Cytoskeleton</location>
        <location evidence="10">Microtubule organizing center</location>
        <location evidence="10">Centrosome</location>
    </subcellularLocation>
    <subcellularLocation>
        <location evidence="10">Cytoplasm</location>
        <location evidence="10">Cytoskeleton</location>
        <location evidence="10">Spindle pole</location>
    </subcellularLocation>
    <text evidence="10">Isoform 2/alpha tends to be more abundant at, and more strongly associated with, centrosomes than isoform 1/beta.</text>
</comment>
<comment type="alternative products">
    <event type="alternative splicing"/>
    <isoform>
        <id>Q9P287-1</id>
        <name>1</name>
        <name>Beta</name>
        <sequence type="displayed"/>
    </isoform>
    <isoform>
        <id>Q9P287-2</id>
        <name>2</name>
        <name>Alpha</name>
        <sequence type="described" ref="VSP_020540"/>
    </isoform>
    <isoform>
        <id>Q9P287-3</id>
        <name>3</name>
        <sequence type="described" ref="VSP_020541"/>
    </isoform>
    <isoform>
        <id>Q9P287-4</id>
        <name>4</name>
        <sequence type="described" ref="VSP_042023"/>
    </isoform>
</comment>
<comment type="tissue specificity">
    <text evidence="3 4">Expressed at high levels in testis and skeletal muscle and at lower levels in brain, heart, kidney, liver, lung, ovary, pancreas, placenta, and spleen.</text>
</comment>
<comment type="developmental stage">
    <text evidence="3">Isoform 1 is expressed throughout the cell cycle. Isoform 2 is expressed following mitosis and peaks in the G1/S phase of the cell cycle.</text>
</comment>
<comment type="miscellaneous">
    <text>HT1080 cells that constitutively express low levels of BCCIP display increased levels of spontaneous single-stranded DNA and double-strand breaks.</text>
</comment>
<comment type="similarity">
    <text evidence="16">Belongs to the BCP1 family.</text>
</comment>
<sequence>MASRSKRRAVESGVPQPPDPPVQRDEEEEKEVENEDEDDDDSDKEKDEEDEVIDEEVNIEFEAYSLSDNDYDGIKKLLQQLFLKAPVNTAELTDLLIQQNHIGSVIKQTDVSEDSNDDMDEDEVFGFISLLNLTERKGTQCVEQIQELVLRFCEKNCEKSMVEQLDKFLNDTTKPVGLLLSERFINVPPQIALPMYQQLQKELAGAHRTNKPCGKCYFYLLISKTFVEAGKNNSKKKPSNKKKAALMFANAEEEFFYEKAILKFNYSVQEESDTCLGGKWSFDDVPMTPLRTVMLIPGDKMNEIMDKLKEYLSV</sequence>